<evidence type="ECO:0000255" key="1"/>
<evidence type="ECO:0000255" key="2">
    <source>
        <dbReference type="PROSITE-ProRule" id="PRU00521"/>
    </source>
</evidence>
<evidence type="ECO:0000269" key="3">
    <source>
    </source>
</evidence>
<evidence type="ECO:0000269" key="4">
    <source>
    </source>
</evidence>
<evidence type="ECO:0000305" key="5"/>
<reference key="1">
    <citation type="journal article" date="2003" name="Nature">
        <title>The DNA sequence and analysis of human chromosome 6.</title>
        <authorList>
            <person name="Mungall A.J."/>
            <person name="Palmer S.A."/>
            <person name="Sims S.K."/>
            <person name="Edwards C.A."/>
            <person name="Ashurst J.L."/>
            <person name="Wilming L."/>
            <person name="Jones M.C."/>
            <person name="Horton R."/>
            <person name="Hunt S.E."/>
            <person name="Scott C.E."/>
            <person name="Gilbert J.G.R."/>
            <person name="Clamp M.E."/>
            <person name="Bethel G."/>
            <person name="Milne S."/>
            <person name="Ainscough R."/>
            <person name="Almeida J.P."/>
            <person name="Ambrose K.D."/>
            <person name="Andrews T.D."/>
            <person name="Ashwell R.I.S."/>
            <person name="Babbage A.K."/>
            <person name="Bagguley C.L."/>
            <person name="Bailey J."/>
            <person name="Banerjee R."/>
            <person name="Barker D.J."/>
            <person name="Barlow K.F."/>
            <person name="Bates K."/>
            <person name="Beare D.M."/>
            <person name="Beasley H."/>
            <person name="Beasley O."/>
            <person name="Bird C.P."/>
            <person name="Blakey S.E."/>
            <person name="Bray-Allen S."/>
            <person name="Brook J."/>
            <person name="Brown A.J."/>
            <person name="Brown J.Y."/>
            <person name="Burford D.C."/>
            <person name="Burrill W."/>
            <person name="Burton J."/>
            <person name="Carder C."/>
            <person name="Carter N.P."/>
            <person name="Chapman J.C."/>
            <person name="Clark S.Y."/>
            <person name="Clark G."/>
            <person name="Clee C.M."/>
            <person name="Clegg S."/>
            <person name="Cobley V."/>
            <person name="Collier R.E."/>
            <person name="Collins J.E."/>
            <person name="Colman L.K."/>
            <person name="Corby N.R."/>
            <person name="Coville G.J."/>
            <person name="Culley K.M."/>
            <person name="Dhami P."/>
            <person name="Davies J."/>
            <person name="Dunn M."/>
            <person name="Earthrowl M.E."/>
            <person name="Ellington A.E."/>
            <person name="Evans K.A."/>
            <person name="Faulkner L."/>
            <person name="Francis M.D."/>
            <person name="Frankish A."/>
            <person name="Frankland J."/>
            <person name="French L."/>
            <person name="Garner P."/>
            <person name="Garnett J."/>
            <person name="Ghori M.J."/>
            <person name="Gilby L.M."/>
            <person name="Gillson C.J."/>
            <person name="Glithero R.J."/>
            <person name="Grafham D.V."/>
            <person name="Grant M."/>
            <person name="Gribble S."/>
            <person name="Griffiths C."/>
            <person name="Griffiths M.N.D."/>
            <person name="Hall R."/>
            <person name="Halls K.S."/>
            <person name="Hammond S."/>
            <person name="Harley J.L."/>
            <person name="Hart E.A."/>
            <person name="Heath P.D."/>
            <person name="Heathcott R."/>
            <person name="Holmes S.J."/>
            <person name="Howden P.J."/>
            <person name="Howe K.L."/>
            <person name="Howell G.R."/>
            <person name="Huckle E."/>
            <person name="Humphray S.J."/>
            <person name="Humphries M.D."/>
            <person name="Hunt A.R."/>
            <person name="Johnson C.M."/>
            <person name="Joy A.A."/>
            <person name="Kay M."/>
            <person name="Keenan S.J."/>
            <person name="Kimberley A.M."/>
            <person name="King A."/>
            <person name="Laird G.K."/>
            <person name="Langford C."/>
            <person name="Lawlor S."/>
            <person name="Leongamornlert D.A."/>
            <person name="Leversha M."/>
            <person name="Lloyd C.R."/>
            <person name="Lloyd D.M."/>
            <person name="Loveland J.E."/>
            <person name="Lovell J."/>
            <person name="Martin S."/>
            <person name="Mashreghi-Mohammadi M."/>
            <person name="Maslen G.L."/>
            <person name="Matthews L."/>
            <person name="McCann O.T."/>
            <person name="McLaren S.J."/>
            <person name="McLay K."/>
            <person name="McMurray A."/>
            <person name="Moore M.J.F."/>
            <person name="Mullikin J.C."/>
            <person name="Niblett D."/>
            <person name="Nickerson T."/>
            <person name="Novik K.L."/>
            <person name="Oliver K."/>
            <person name="Overton-Larty E.K."/>
            <person name="Parker A."/>
            <person name="Patel R."/>
            <person name="Pearce A.V."/>
            <person name="Peck A.I."/>
            <person name="Phillimore B.J.C.T."/>
            <person name="Phillips S."/>
            <person name="Plumb R.W."/>
            <person name="Porter K.M."/>
            <person name="Ramsey Y."/>
            <person name="Ranby S.A."/>
            <person name="Rice C.M."/>
            <person name="Ross M.T."/>
            <person name="Searle S.M."/>
            <person name="Sehra H.K."/>
            <person name="Sheridan E."/>
            <person name="Skuce C.D."/>
            <person name="Smith S."/>
            <person name="Smith M."/>
            <person name="Spraggon L."/>
            <person name="Squares S.L."/>
            <person name="Steward C.A."/>
            <person name="Sycamore N."/>
            <person name="Tamlyn-Hall G."/>
            <person name="Tester J."/>
            <person name="Theaker A.J."/>
            <person name="Thomas D.W."/>
            <person name="Thorpe A."/>
            <person name="Tracey A."/>
            <person name="Tromans A."/>
            <person name="Tubby B."/>
            <person name="Wall M."/>
            <person name="Wallis J.M."/>
            <person name="West A.P."/>
            <person name="White S.S."/>
            <person name="Whitehead S.L."/>
            <person name="Whittaker H."/>
            <person name="Wild A."/>
            <person name="Willey D.J."/>
            <person name="Wilmer T.E."/>
            <person name="Wood J.M."/>
            <person name="Wray P.W."/>
            <person name="Wyatt J.C."/>
            <person name="Young L."/>
            <person name="Younger R.M."/>
            <person name="Bentley D.R."/>
            <person name="Coulson A."/>
            <person name="Durbin R.M."/>
            <person name="Hubbard T."/>
            <person name="Sulston J.E."/>
            <person name="Dunham I."/>
            <person name="Rogers J."/>
            <person name="Beck S."/>
        </authorList>
    </citation>
    <scope>NUCLEOTIDE SEQUENCE [LARGE SCALE GENOMIC DNA]</scope>
    <scope>VARIANT VAL-246</scope>
</reference>
<reference key="2">
    <citation type="journal article" date="2004" name="Genome Res.">
        <title>The status, quality, and expansion of the NIH full-length cDNA project: the Mammalian Gene Collection (MGC).</title>
        <authorList>
            <consortium name="The MGC Project Team"/>
        </authorList>
    </citation>
    <scope>NUCLEOTIDE SEQUENCE [LARGE SCALE MRNA]</scope>
    <source>
        <tissue>Testis</tissue>
    </source>
</reference>
<reference key="3">
    <citation type="journal article" date="2002" name="Genomics">
        <title>DEFOG: a practical scheme for deciphering families of genes.</title>
        <authorList>
            <person name="Fuchs T."/>
            <person name="Malecova B."/>
            <person name="Linhart C."/>
            <person name="Sharan R."/>
            <person name="Khen M."/>
            <person name="Herwig R."/>
            <person name="Shmulevich D."/>
            <person name="Elkon R."/>
            <person name="Steinfath M."/>
            <person name="O'Brien J.K."/>
            <person name="Radelof U."/>
            <person name="Lehrach H."/>
            <person name="Lancet D."/>
            <person name="Shamir R."/>
        </authorList>
    </citation>
    <scope>NUCLEOTIDE SEQUENCE [GENOMIC DNA] OF 67-282</scope>
    <scope>VARIANT VAL-246</scope>
</reference>
<reference key="4">
    <citation type="journal article" date="2003" name="Nat. Genet.">
        <title>Different noses for different people.</title>
        <authorList>
            <person name="Menashe I."/>
            <person name="Man O."/>
            <person name="Lancet D."/>
            <person name="Gilad Y."/>
        </authorList>
    </citation>
    <scope>POLYMORPHISM</scope>
</reference>
<comment type="function">
    <text evidence="5">Odorant receptor.</text>
</comment>
<comment type="subcellular location">
    <subcellularLocation>
        <location>Cell membrane</location>
        <topology>Multi-pass membrane protein</topology>
    </subcellularLocation>
</comment>
<comment type="polymorphism">
    <text>A stop codon at position Gln-55 in the gene coding for this protein is responsible for functional diversity thus producing a pseudogene. The stop codon is more frequent in African-Americans than in non-Africans.</text>
</comment>
<comment type="similarity">
    <text evidence="2">Belongs to the G-protein coupled receptor 1 family.</text>
</comment>
<comment type="sequence caution" evidence="5">
    <conflict type="erroneous initiation">
        <sequence resource="EMBL-CDS" id="CAB44507"/>
    </conflict>
    <text>Truncated N-terminus.</text>
</comment>
<comment type="online information" name="Human Olfactory Receptor Data Exploratorium (HORDE)">
    <link uri="http://genome.weizmann.ac.il/horde/card/index/symbol:OR10C2"/>
</comment>
<organism>
    <name type="scientific">Homo sapiens</name>
    <name type="common">Human</name>
    <dbReference type="NCBI Taxonomy" id="9606"/>
    <lineage>
        <taxon>Eukaryota</taxon>
        <taxon>Metazoa</taxon>
        <taxon>Chordata</taxon>
        <taxon>Craniata</taxon>
        <taxon>Vertebrata</taxon>
        <taxon>Euteleostomi</taxon>
        <taxon>Mammalia</taxon>
        <taxon>Eutheria</taxon>
        <taxon>Euarchontoglires</taxon>
        <taxon>Primates</taxon>
        <taxon>Haplorrhini</taxon>
        <taxon>Catarrhini</taxon>
        <taxon>Hominidae</taxon>
        <taxon>Homo</taxon>
    </lineage>
</organism>
<name>O10C1_HUMAN</name>
<feature type="chain" id="PRO_0000150693" description="Olfactory receptor 10C1">
    <location>
        <begin position="1"/>
        <end position="312"/>
    </location>
</feature>
<feature type="topological domain" description="Extracellular" evidence="1">
    <location>
        <begin position="1"/>
        <end position="24"/>
    </location>
</feature>
<feature type="transmembrane region" description="Helical; Name=1" evidence="1">
    <location>
        <begin position="25"/>
        <end position="45"/>
    </location>
</feature>
<feature type="topological domain" description="Cytoplasmic" evidence="1">
    <location>
        <begin position="46"/>
        <end position="53"/>
    </location>
</feature>
<feature type="transmembrane region" description="Helical; Name=2" evidence="1">
    <location>
        <begin position="54"/>
        <end position="74"/>
    </location>
</feature>
<feature type="topological domain" description="Extracellular" evidence="1">
    <location>
        <begin position="75"/>
        <end position="98"/>
    </location>
</feature>
<feature type="transmembrane region" description="Helical; Name=3" evidence="1">
    <location>
        <begin position="99"/>
        <end position="119"/>
    </location>
</feature>
<feature type="topological domain" description="Cytoplasmic" evidence="1">
    <location>
        <begin position="120"/>
        <end position="138"/>
    </location>
</feature>
<feature type="transmembrane region" description="Helical; Name=4" evidence="1">
    <location>
        <begin position="139"/>
        <end position="159"/>
    </location>
</feature>
<feature type="topological domain" description="Extracellular" evidence="1">
    <location>
        <begin position="160"/>
        <end position="196"/>
    </location>
</feature>
<feature type="transmembrane region" description="Helical; Name=5" evidence="1">
    <location>
        <begin position="197"/>
        <end position="216"/>
    </location>
</feature>
<feature type="topological domain" description="Cytoplasmic" evidence="1">
    <location>
        <begin position="217"/>
        <end position="236"/>
    </location>
</feature>
<feature type="transmembrane region" description="Helical; Name=6" evidence="1">
    <location>
        <begin position="237"/>
        <end position="257"/>
    </location>
</feature>
<feature type="topological domain" description="Extracellular" evidence="1">
    <location>
        <begin position="258"/>
        <end position="270"/>
    </location>
</feature>
<feature type="transmembrane region" description="Helical; Name=7" evidence="1">
    <location>
        <begin position="271"/>
        <end position="291"/>
    </location>
</feature>
<feature type="topological domain" description="Cytoplasmic" evidence="1">
    <location>
        <begin position="292"/>
        <end position="312"/>
    </location>
</feature>
<feature type="glycosylation site" description="N-linked (GlcNAc...) asparagine" evidence="1">
    <location>
        <position position="4"/>
    </location>
</feature>
<feature type="disulfide bond" evidence="2">
    <location>
        <begin position="96"/>
        <end position="188"/>
    </location>
</feature>
<feature type="sequence variant" id="VAR_037822" description="In dbSNP:rs17184016.">
    <original>P</original>
    <variation>S</variation>
    <location>
        <position position="57"/>
    </location>
</feature>
<feature type="sequence variant" id="VAR_037823" description="In dbSNP:rs2074469.">
    <original>F</original>
    <variation>L</variation>
    <location>
        <position position="60"/>
    </location>
</feature>
<feature type="sequence variant" id="VAR_037824" description="In dbSNP:rs11755182.">
    <original>R</original>
    <variation>S</variation>
    <location>
        <position position="89"/>
    </location>
</feature>
<feature type="sequence variant" id="VAR_037825" description="In dbSNP:rs17177632.">
    <original>M</original>
    <variation>V</variation>
    <location>
        <position position="100"/>
    </location>
</feature>
<feature type="sequence variant" id="VAR_037826" description="In dbSNP:rs17177639.">
    <original>R</original>
    <variation>C</variation>
    <location>
        <position position="121"/>
    </location>
</feature>
<feature type="sequence variant" id="VAR_037827" description="In dbSNP:rs17177646.">
    <original>R</original>
    <variation>W</variation>
    <location>
        <position position="138"/>
    </location>
</feature>
<feature type="sequence variant" id="VAR_037828" description="In dbSNP:rs2074468.">
    <original>P</original>
    <variation>S</variation>
    <location>
        <position position="160"/>
    </location>
</feature>
<feature type="sequence variant" id="VAR_037829" description="In dbSNP:rs2074467.">
    <original>F</original>
    <variation>L</variation>
    <location>
        <position position="161"/>
    </location>
</feature>
<feature type="sequence variant" id="VAR_037830" description="In dbSNP:rs2074466.">
    <original>P</original>
    <variation>Q</variation>
    <location>
        <position position="174"/>
    </location>
</feature>
<feature type="sequence variant" id="VAR_037831" description="In dbSNP:rs2074464." evidence="3 4">
    <original>M</original>
    <variation>V</variation>
    <location>
        <position position="246"/>
    </location>
</feature>
<feature type="sequence variant" id="VAR_037832" description="In dbSNP:rs17177674.">
    <original>L</original>
    <variation>I</variation>
    <location>
        <position position="255"/>
    </location>
</feature>
<feature type="sequence variant" id="VAR_037833" description="In dbSNP:rs11968123.">
    <original>M</original>
    <variation>R</variation>
    <location>
        <position position="310"/>
    </location>
</feature>
<keyword id="KW-1003">Cell membrane</keyword>
<keyword id="KW-1015">Disulfide bond</keyword>
<keyword id="KW-0297">G-protein coupled receptor</keyword>
<keyword id="KW-0325">Glycoprotein</keyword>
<keyword id="KW-0472">Membrane</keyword>
<keyword id="KW-0552">Olfaction</keyword>
<keyword id="KW-0675">Receptor</keyword>
<keyword id="KW-1185">Reference proteome</keyword>
<keyword id="KW-0716">Sensory transduction</keyword>
<keyword id="KW-0807">Transducer</keyword>
<keyword id="KW-0812">Transmembrane</keyword>
<keyword id="KW-1133">Transmembrane helix</keyword>
<dbReference type="EMBL" id="AL035542">
    <property type="protein sequence ID" value="CAB44507.1"/>
    <property type="status" value="ALT_INIT"/>
    <property type="molecule type" value="Genomic_DNA"/>
</dbReference>
<dbReference type="EMBL" id="AL645927">
    <property type="status" value="NOT_ANNOTATED_CDS"/>
    <property type="molecule type" value="Genomic_DNA"/>
</dbReference>
<dbReference type="EMBL" id="CR759768">
    <property type="status" value="NOT_ANNOTATED_CDS"/>
    <property type="molecule type" value="Genomic_DNA"/>
</dbReference>
<dbReference type="EMBL" id="CR388393">
    <property type="status" value="NOT_ANNOTATED_CDS"/>
    <property type="molecule type" value="Genomic_DNA"/>
</dbReference>
<dbReference type="EMBL" id="BC136996">
    <property type="protein sequence ID" value="AAI36997.1"/>
    <property type="molecule type" value="mRNA"/>
</dbReference>
<dbReference type="EMBL" id="BC136997">
    <property type="protein sequence ID" value="AAI36998.1"/>
    <property type="molecule type" value="mRNA"/>
</dbReference>
<dbReference type="EMBL" id="AF399627">
    <property type="protein sequence ID" value="AAK95112.1"/>
    <property type="molecule type" value="Genomic_DNA"/>
</dbReference>
<dbReference type="CCDS" id="CCDS34364.1"/>
<dbReference type="RefSeq" id="NP_039229.3">
    <property type="nucleotide sequence ID" value="NM_013941.3"/>
</dbReference>
<dbReference type="SMR" id="Q96KK4"/>
<dbReference type="FunCoup" id="Q96KK4">
    <property type="interactions" value="467"/>
</dbReference>
<dbReference type="STRING" id="9606.ENSP00000419119"/>
<dbReference type="GlyCosmos" id="Q96KK4">
    <property type="glycosylation" value="1 site, No reported glycans"/>
</dbReference>
<dbReference type="GlyGen" id="Q96KK4">
    <property type="glycosylation" value="1 site"/>
</dbReference>
<dbReference type="iPTMnet" id="Q96KK4"/>
<dbReference type="PhosphoSitePlus" id="Q96KK4"/>
<dbReference type="BioMuta" id="OR10C1"/>
<dbReference type="DMDM" id="296439284"/>
<dbReference type="MassIVE" id="Q96KK4"/>
<dbReference type="PaxDb" id="9606-ENSP00000485032"/>
<dbReference type="Antibodypedia" id="57682">
    <property type="antibodies" value="53 antibodies from 17 providers"/>
</dbReference>
<dbReference type="DNASU" id="442194"/>
<dbReference type="Ensembl" id="ENST00000377138.1">
    <property type="protein sequence ID" value="ENSP00000366343.1"/>
    <property type="gene ID" value="ENSG00000229412.5"/>
</dbReference>
<dbReference type="Ensembl" id="ENST00000391549.2">
    <property type="protein sequence ID" value="ENSP00000375393.2"/>
    <property type="gene ID" value="ENSG00000204689.7"/>
</dbReference>
<dbReference type="Ensembl" id="ENST00000437403.1">
    <property type="protein sequence ID" value="ENSP00000408961.1"/>
    <property type="gene ID" value="ENSG00000224234.5"/>
</dbReference>
<dbReference type="Ensembl" id="ENST00000444197.3">
    <property type="protein sequence ID" value="ENSP00000419119.1"/>
    <property type="gene ID" value="ENSG00000206474.8"/>
</dbReference>
<dbReference type="Ensembl" id="ENST00000455234.1">
    <property type="protein sequence ID" value="ENSP00000402486.1"/>
    <property type="gene ID" value="ENSG00000230505.4"/>
</dbReference>
<dbReference type="Ensembl" id="ENST00000457403.1">
    <property type="protein sequence ID" value="ENSP00000412512.1"/>
    <property type="gene ID" value="ENSG00000232397.5"/>
</dbReference>
<dbReference type="GeneID" id="442194"/>
<dbReference type="KEGG" id="hsa:442194"/>
<dbReference type="MANE-Select" id="ENST00000444197.3">
    <property type="protein sequence ID" value="ENSP00000419119.1"/>
    <property type="RefSeq nucleotide sequence ID" value="NM_013941.4"/>
    <property type="RefSeq protein sequence ID" value="NP_039229.3"/>
</dbReference>
<dbReference type="UCSC" id="uc011dlp.3">
    <property type="organism name" value="human"/>
</dbReference>
<dbReference type="AGR" id="HGNC:8165"/>
<dbReference type="CTD" id="442194"/>
<dbReference type="GeneCards" id="OR10C1"/>
<dbReference type="HGNC" id="HGNC:8165">
    <property type="gene designation" value="OR10C1"/>
</dbReference>
<dbReference type="HPA" id="ENSG00000206474">
    <property type="expression patterns" value="Not detected"/>
</dbReference>
<dbReference type="neXtProt" id="NX_Q96KK4"/>
<dbReference type="VEuPathDB" id="HostDB:ENSG00000206474"/>
<dbReference type="eggNOG" id="ENOG502QVH7">
    <property type="taxonomic scope" value="Eukaryota"/>
</dbReference>
<dbReference type="GeneTree" id="ENSGT01120000271813"/>
<dbReference type="HOGENOM" id="CLU_012526_0_1_1"/>
<dbReference type="InParanoid" id="Q96KK4"/>
<dbReference type="OMA" id="SHRMCLQ"/>
<dbReference type="OrthoDB" id="9975554at2759"/>
<dbReference type="PAN-GO" id="Q96KK4">
    <property type="GO annotations" value="1 GO annotation based on evolutionary models"/>
</dbReference>
<dbReference type="PhylomeDB" id="Q96KK4"/>
<dbReference type="TreeFam" id="TF337350"/>
<dbReference type="PathwayCommons" id="Q96KK4"/>
<dbReference type="Reactome" id="R-HSA-9752946">
    <property type="pathway name" value="Expression and translocation of olfactory receptors"/>
</dbReference>
<dbReference type="BioGRID-ORCS" id="442194">
    <property type="hits" value="44 hits in 739 CRISPR screens"/>
</dbReference>
<dbReference type="GeneWiki" id="OR10C1"/>
<dbReference type="GenomeRNAi" id="442194"/>
<dbReference type="Pharos" id="Q96KK4">
    <property type="development level" value="Tdark"/>
</dbReference>
<dbReference type="PRO" id="PR:Q96KK4"/>
<dbReference type="Proteomes" id="UP000005640">
    <property type="component" value="Chromosome 6"/>
</dbReference>
<dbReference type="RNAct" id="Q96KK4">
    <property type="molecule type" value="protein"/>
</dbReference>
<dbReference type="Bgee" id="ENSG00000206474">
    <property type="expression patterns" value="Expressed in bone marrow cell"/>
</dbReference>
<dbReference type="ExpressionAtlas" id="Q96KK4">
    <property type="expression patterns" value="baseline and differential"/>
</dbReference>
<dbReference type="GO" id="GO:0005886">
    <property type="term" value="C:plasma membrane"/>
    <property type="evidence" value="ECO:0000318"/>
    <property type="project" value="GO_Central"/>
</dbReference>
<dbReference type="GO" id="GO:0004930">
    <property type="term" value="F:G protein-coupled receptor activity"/>
    <property type="evidence" value="ECO:0007669"/>
    <property type="project" value="UniProtKB-KW"/>
</dbReference>
<dbReference type="GO" id="GO:0004984">
    <property type="term" value="F:olfactory receptor activity"/>
    <property type="evidence" value="ECO:0000318"/>
    <property type="project" value="GO_Central"/>
</dbReference>
<dbReference type="GO" id="GO:0050911">
    <property type="term" value="P:detection of chemical stimulus involved in sensory perception of smell"/>
    <property type="evidence" value="ECO:0000318"/>
    <property type="project" value="GO_Central"/>
</dbReference>
<dbReference type="CDD" id="cd15225">
    <property type="entry name" value="7tmA_OR10A-like"/>
    <property type="match status" value="1"/>
</dbReference>
<dbReference type="FunFam" id="1.20.1070.10:FF:000001">
    <property type="entry name" value="Olfactory receptor"/>
    <property type="match status" value="1"/>
</dbReference>
<dbReference type="Gene3D" id="1.20.1070.10">
    <property type="entry name" value="Rhodopsin 7-helix transmembrane proteins"/>
    <property type="match status" value="1"/>
</dbReference>
<dbReference type="InterPro" id="IPR000276">
    <property type="entry name" value="GPCR_Rhodpsn"/>
</dbReference>
<dbReference type="InterPro" id="IPR017452">
    <property type="entry name" value="GPCR_Rhodpsn_7TM"/>
</dbReference>
<dbReference type="InterPro" id="IPR000725">
    <property type="entry name" value="Olfact_rcpt"/>
</dbReference>
<dbReference type="PANTHER" id="PTHR26453">
    <property type="entry name" value="OLFACTORY RECEPTOR"/>
    <property type="match status" value="1"/>
</dbReference>
<dbReference type="Pfam" id="PF13853">
    <property type="entry name" value="7tm_4"/>
    <property type="match status" value="1"/>
</dbReference>
<dbReference type="PRINTS" id="PR00237">
    <property type="entry name" value="GPCRRHODOPSN"/>
</dbReference>
<dbReference type="PRINTS" id="PR00245">
    <property type="entry name" value="OLFACTORYR"/>
</dbReference>
<dbReference type="SUPFAM" id="SSF81321">
    <property type="entry name" value="Family A G protein-coupled receptor-like"/>
    <property type="match status" value="1"/>
</dbReference>
<dbReference type="PROSITE" id="PS00237">
    <property type="entry name" value="G_PROTEIN_RECEP_F1_1"/>
    <property type="match status" value="1"/>
</dbReference>
<dbReference type="PROSITE" id="PS50262">
    <property type="entry name" value="G_PROTEIN_RECEP_F1_2"/>
    <property type="match status" value="1"/>
</dbReference>
<accession>Q96KK4</accession>
<accession>Q5SUN7</accession>
<accession>Q96R18</accession>
<proteinExistence type="evidence at transcript level"/>
<gene>
    <name type="primary">OR10C1</name>
    <name type="synonym">OR10C2</name>
</gene>
<sequence>MSANTSMVTEFLLLGFSHLADLQGLLFSVFLTIYLLTVAGNFLIVVLVSTDAALQSPMYFFLRTLSALEIGYTSVTVPLLLHHLLTGRRHISRSGCALQMFFFLFFGATECCLLAAMAYDRYAAICEPLRYPLLLSHRVCLQLAGSAWACGVLVGLGHTPFIFSLPFCGPNTIPQFFCEIQPVLQLVCGDTSLNELQIILATALLILCPFGLILGSYGRILVTIFRIPSVAGRRKAFSTCSSHLIMVSLFYGTALFIYIRPKASYDPATDPLVSLFYAVVTPILNPIIYSLRNTEVKAALKRTIQKTVPMEI</sequence>
<protein>
    <recommendedName>
        <fullName>Olfactory receptor 10C1</fullName>
    </recommendedName>
    <alternativeName>
        <fullName>Hs6M1-17</fullName>
    </alternativeName>
    <alternativeName>
        <fullName>Olfactory receptor 10C2</fullName>
    </alternativeName>
</protein>